<accession>Q6N8F6</accession>
<evidence type="ECO:0000305" key="1"/>
<keyword id="KW-0884">PQQ biosynthesis</keyword>
<keyword id="KW-0813">Transport</keyword>
<gene>
    <name type="primary">pqqB</name>
    <name type="ordered locus">RPA1947</name>
</gene>
<dbReference type="EMBL" id="BX572599">
    <property type="protein sequence ID" value="CAE27388.1"/>
    <property type="molecule type" value="Genomic_DNA"/>
</dbReference>
<dbReference type="RefSeq" id="WP_011157502.1">
    <property type="nucleotide sequence ID" value="NZ_CP116810.1"/>
</dbReference>
<dbReference type="SMR" id="Q6N8F6"/>
<dbReference type="STRING" id="258594.RPA1947"/>
<dbReference type="GeneID" id="66892991"/>
<dbReference type="eggNOG" id="COG1235">
    <property type="taxonomic scope" value="Bacteria"/>
</dbReference>
<dbReference type="HOGENOM" id="CLU_061120_0_0_5"/>
<dbReference type="PhylomeDB" id="Q6N8F6"/>
<dbReference type="UniPathway" id="UPA00539"/>
<dbReference type="GO" id="GO:0018189">
    <property type="term" value="P:pyrroloquinoline quinone biosynthetic process"/>
    <property type="evidence" value="ECO:0007669"/>
    <property type="project" value="UniProtKB-UniRule"/>
</dbReference>
<dbReference type="Gene3D" id="3.60.15.10">
    <property type="entry name" value="Ribonuclease Z/Hydroxyacylglutathione hydrolase-like"/>
    <property type="match status" value="1"/>
</dbReference>
<dbReference type="HAMAP" id="MF_00653">
    <property type="entry name" value="PQQ_syn_PqqB"/>
    <property type="match status" value="1"/>
</dbReference>
<dbReference type="InterPro" id="IPR001279">
    <property type="entry name" value="Metallo-B-lactamas"/>
</dbReference>
<dbReference type="InterPro" id="IPR011842">
    <property type="entry name" value="PQQ_synth_PqqB"/>
</dbReference>
<dbReference type="InterPro" id="IPR036866">
    <property type="entry name" value="RibonucZ/Hydroxyglut_hydro"/>
</dbReference>
<dbReference type="NCBIfam" id="TIGR02108">
    <property type="entry name" value="PQQ_syn_pqqB"/>
    <property type="match status" value="1"/>
</dbReference>
<dbReference type="PANTHER" id="PTHR42663:SF7">
    <property type="entry name" value="COENZYME PQQ SYNTHESIS PROTEIN B"/>
    <property type="match status" value="1"/>
</dbReference>
<dbReference type="PANTHER" id="PTHR42663">
    <property type="entry name" value="HYDROLASE C777.06C-RELATED-RELATED"/>
    <property type="match status" value="1"/>
</dbReference>
<dbReference type="Pfam" id="PF12706">
    <property type="entry name" value="Lactamase_B_2"/>
    <property type="match status" value="1"/>
</dbReference>
<dbReference type="SUPFAM" id="SSF56281">
    <property type="entry name" value="Metallo-hydrolase/oxidoreductase"/>
    <property type="match status" value="1"/>
</dbReference>
<feature type="chain" id="PRO_0000220009" description="Coenzyme PQQ synthesis protein B">
    <location>
        <begin position="1"/>
        <end position="308"/>
    </location>
</feature>
<name>PQQB_RHOPA</name>
<comment type="function">
    <text>May be involved in the transport of PQQ or its precursor to the periplasm, in association with PQQ biosynthesis, but is not absolutely required for this synthesis.</text>
</comment>
<comment type="pathway">
    <text>Cofactor biosynthesis; pyrroloquinoline quinone biosynthesis.</text>
</comment>
<comment type="similarity">
    <text evidence="1">Belongs to the PqqB family.</text>
</comment>
<reference key="1">
    <citation type="journal article" date="2004" name="Nat. Biotechnol.">
        <title>Complete genome sequence of the metabolically versatile photosynthetic bacterium Rhodopseudomonas palustris.</title>
        <authorList>
            <person name="Larimer F.W."/>
            <person name="Chain P."/>
            <person name="Hauser L."/>
            <person name="Lamerdin J.E."/>
            <person name="Malfatti S."/>
            <person name="Do L."/>
            <person name="Land M.L."/>
            <person name="Pelletier D.A."/>
            <person name="Beatty J.T."/>
            <person name="Lang A.S."/>
            <person name="Tabita F.R."/>
            <person name="Gibson J.L."/>
            <person name="Hanson T.E."/>
            <person name="Bobst C."/>
            <person name="Torres y Torres J.L."/>
            <person name="Peres C."/>
            <person name="Harrison F.H."/>
            <person name="Gibson J."/>
            <person name="Harwood C.S."/>
        </authorList>
    </citation>
    <scope>NUCLEOTIDE SEQUENCE [LARGE SCALE GENOMIC DNA]</scope>
    <source>
        <strain>ATCC BAA-98 / CGA009</strain>
    </source>
</reference>
<protein>
    <recommendedName>
        <fullName>Coenzyme PQQ synthesis protein B</fullName>
    </recommendedName>
    <alternativeName>
        <fullName>Pyrroloquinoline quinone biosynthesis protein B</fullName>
    </alternativeName>
</protein>
<sequence length="308" mass="32195">MLRVIVLGAAAGGGVPQWNCGCPVCRAALDDPRLARTQASLAISADNAHWFLINASPDLRQQIVATPQLHPRAGALRHSPIAGVILTNGEVDAVAGLLSMREGSPFSIYAHDKVLAILRANSIFNVLNESIVPRRPIATDQPFEPLLPDGALSGLQITAFEVPGKGAWYLEGRAHPGGDSQSGDTLGLTITDKSTGQSLHVLTACARVTDDLKARLAGAPLLLFDGTVWRDDELITAGLGTKTGQAMGHIAMAGDDGAIAALADLGIGQKLFLHINNSNPALLAHSAERGQLETAGWQIPADGTEVTL</sequence>
<proteinExistence type="inferred from homology"/>
<organism>
    <name type="scientific">Rhodopseudomonas palustris (strain ATCC BAA-98 / CGA009)</name>
    <dbReference type="NCBI Taxonomy" id="258594"/>
    <lineage>
        <taxon>Bacteria</taxon>
        <taxon>Pseudomonadati</taxon>
        <taxon>Pseudomonadota</taxon>
        <taxon>Alphaproteobacteria</taxon>
        <taxon>Hyphomicrobiales</taxon>
        <taxon>Nitrobacteraceae</taxon>
        <taxon>Rhodopseudomonas</taxon>
    </lineage>
</organism>